<accession>Q9D7W5</accession>
<accession>Q3UGB4</accession>
<accession>Q99LM4</accession>
<accession>Q9JJ84</accession>
<reference key="1">
    <citation type="submission" date="2000-04" db="EMBL/GenBank/DDBJ databases">
        <title>Isolation of full-length cDNA clones from mouse brain cDNA library made by oligo-capping method.</title>
        <authorList>
            <person name="Osada N."/>
            <person name="Kusuda J."/>
            <person name="Tanuma R."/>
            <person name="Ito A."/>
            <person name="Hirata M."/>
            <person name="Sugano S."/>
            <person name="Hashimoto K."/>
        </authorList>
    </citation>
    <scope>NUCLEOTIDE SEQUENCE [LARGE SCALE MRNA]</scope>
    <source>
        <strain>C57BL/6J</strain>
        <tissue>Brain</tissue>
    </source>
</reference>
<reference key="2">
    <citation type="journal article" date="2005" name="Science">
        <title>The transcriptional landscape of the mammalian genome.</title>
        <authorList>
            <person name="Carninci P."/>
            <person name="Kasukawa T."/>
            <person name="Katayama S."/>
            <person name="Gough J."/>
            <person name="Frith M.C."/>
            <person name="Maeda N."/>
            <person name="Oyama R."/>
            <person name="Ravasi T."/>
            <person name="Lenhard B."/>
            <person name="Wells C."/>
            <person name="Kodzius R."/>
            <person name="Shimokawa K."/>
            <person name="Bajic V.B."/>
            <person name="Brenner S.E."/>
            <person name="Batalov S."/>
            <person name="Forrest A.R."/>
            <person name="Zavolan M."/>
            <person name="Davis M.J."/>
            <person name="Wilming L.G."/>
            <person name="Aidinis V."/>
            <person name="Allen J.E."/>
            <person name="Ambesi-Impiombato A."/>
            <person name="Apweiler R."/>
            <person name="Aturaliya R.N."/>
            <person name="Bailey T.L."/>
            <person name="Bansal M."/>
            <person name="Baxter L."/>
            <person name="Beisel K.W."/>
            <person name="Bersano T."/>
            <person name="Bono H."/>
            <person name="Chalk A.M."/>
            <person name="Chiu K.P."/>
            <person name="Choudhary V."/>
            <person name="Christoffels A."/>
            <person name="Clutterbuck D.R."/>
            <person name="Crowe M.L."/>
            <person name="Dalla E."/>
            <person name="Dalrymple B.P."/>
            <person name="de Bono B."/>
            <person name="Della Gatta G."/>
            <person name="di Bernardo D."/>
            <person name="Down T."/>
            <person name="Engstrom P."/>
            <person name="Fagiolini M."/>
            <person name="Faulkner G."/>
            <person name="Fletcher C.F."/>
            <person name="Fukushima T."/>
            <person name="Furuno M."/>
            <person name="Futaki S."/>
            <person name="Gariboldi M."/>
            <person name="Georgii-Hemming P."/>
            <person name="Gingeras T.R."/>
            <person name="Gojobori T."/>
            <person name="Green R.E."/>
            <person name="Gustincich S."/>
            <person name="Harbers M."/>
            <person name="Hayashi Y."/>
            <person name="Hensch T.K."/>
            <person name="Hirokawa N."/>
            <person name="Hill D."/>
            <person name="Huminiecki L."/>
            <person name="Iacono M."/>
            <person name="Ikeo K."/>
            <person name="Iwama A."/>
            <person name="Ishikawa T."/>
            <person name="Jakt M."/>
            <person name="Kanapin A."/>
            <person name="Katoh M."/>
            <person name="Kawasawa Y."/>
            <person name="Kelso J."/>
            <person name="Kitamura H."/>
            <person name="Kitano H."/>
            <person name="Kollias G."/>
            <person name="Krishnan S.P."/>
            <person name="Kruger A."/>
            <person name="Kummerfeld S.K."/>
            <person name="Kurochkin I.V."/>
            <person name="Lareau L.F."/>
            <person name="Lazarevic D."/>
            <person name="Lipovich L."/>
            <person name="Liu J."/>
            <person name="Liuni S."/>
            <person name="McWilliam S."/>
            <person name="Madan Babu M."/>
            <person name="Madera M."/>
            <person name="Marchionni L."/>
            <person name="Matsuda H."/>
            <person name="Matsuzawa S."/>
            <person name="Miki H."/>
            <person name="Mignone F."/>
            <person name="Miyake S."/>
            <person name="Morris K."/>
            <person name="Mottagui-Tabar S."/>
            <person name="Mulder N."/>
            <person name="Nakano N."/>
            <person name="Nakauchi H."/>
            <person name="Ng P."/>
            <person name="Nilsson R."/>
            <person name="Nishiguchi S."/>
            <person name="Nishikawa S."/>
            <person name="Nori F."/>
            <person name="Ohara O."/>
            <person name="Okazaki Y."/>
            <person name="Orlando V."/>
            <person name="Pang K.C."/>
            <person name="Pavan W.J."/>
            <person name="Pavesi G."/>
            <person name="Pesole G."/>
            <person name="Petrovsky N."/>
            <person name="Piazza S."/>
            <person name="Reed J."/>
            <person name="Reid J.F."/>
            <person name="Ring B.Z."/>
            <person name="Ringwald M."/>
            <person name="Rost B."/>
            <person name="Ruan Y."/>
            <person name="Salzberg S.L."/>
            <person name="Sandelin A."/>
            <person name="Schneider C."/>
            <person name="Schoenbach C."/>
            <person name="Sekiguchi K."/>
            <person name="Semple C.A."/>
            <person name="Seno S."/>
            <person name="Sessa L."/>
            <person name="Sheng Y."/>
            <person name="Shibata Y."/>
            <person name="Shimada H."/>
            <person name="Shimada K."/>
            <person name="Silva D."/>
            <person name="Sinclair B."/>
            <person name="Sperling S."/>
            <person name="Stupka E."/>
            <person name="Sugiura K."/>
            <person name="Sultana R."/>
            <person name="Takenaka Y."/>
            <person name="Taki K."/>
            <person name="Tammoja K."/>
            <person name="Tan S.L."/>
            <person name="Tang S."/>
            <person name="Taylor M.S."/>
            <person name="Tegner J."/>
            <person name="Teichmann S.A."/>
            <person name="Ueda H.R."/>
            <person name="van Nimwegen E."/>
            <person name="Verardo R."/>
            <person name="Wei C.L."/>
            <person name="Yagi K."/>
            <person name="Yamanishi H."/>
            <person name="Zabarovsky E."/>
            <person name="Zhu S."/>
            <person name="Zimmer A."/>
            <person name="Hide W."/>
            <person name="Bult C."/>
            <person name="Grimmond S.M."/>
            <person name="Teasdale R.D."/>
            <person name="Liu E.T."/>
            <person name="Brusic V."/>
            <person name="Quackenbush J."/>
            <person name="Wahlestedt C."/>
            <person name="Mattick J.S."/>
            <person name="Hume D.A."/>
            <person name="Kai C."/>
            <person name="Sasaki D."/>
            <person name="Tomaru Y."/>
            <person name="Fukuda S."/>
            <person name="Kanamori-Katayama M."/>
            <person name="Suzuki M."/>
            <person name="Aoki J."/>
            <person name="Arakawa T."/>
            <person name="Iida J."/>
            <person name="Imamura K."/>
            <person name="Itoh M."/>
            <person name="Kato T."/>
            <person name="Kawaji H."/>
            <person name="Kawagashira N."/>
            <person name="Kawashima T."/>
            <person name="Kojima M."/>
            <person name="Kondo S."/>
            <person name="Konno H."/>
            <person name="Nakano K."/>
            <person name="Ninomiya N."/>
            <person name="Nishio T."/>
            <person name="Okada M."/>
            <person name="Plessy C."/>
            <person name="Shibata K."/>
            <person name="Shiraki T."/>
            <person name="Suzuki S."/>
            <person name="Tagami M."/>
            <person name="Waki K."/>
            <person name="Watahiki A."/>
            <person name="Okamura-Oho Y."/>
            <person name="Suzuki H."/>
            <person name="Kawai J."/>
            <person name="Hayashizaki Y."/>
        </authorList>
    </citation>
    <scope>NUCLEOTIDE SEQUENCE [LARGE SCALE MRNA]</scope>
    <source>
        <strain>C57BL/6J</strain>
        <tissue>Heart</tissue>
        <tissue>Stomach</tissue>
    </source>
</reference>
<reference key="3">
    <citation type="journal article" date="2004" name="Genome Res.">
        <title>The status, quality, and expansion of the NIH full-length cDNA project: the Mammalian Gene Collection (MGC).</title>
        <authorList>
            <consortium name="The MGC Project Team"/>
        </authorList>
    </citation>
    <scope>NUCLEOTIDE SEQUENCE [LARGE SCALE MRNA]</scope>
</reference>
<reference key="4">
    <citation type="journal article" date="2010" name="Cell">
        <title>A tissue-specific atlas of mouse protein phosphorylation and expression.</title>
        <authorList>
            <person name="Huttlin E.L."/>
            <person name="Jedrychowski M.P."/>
            <person name="Elias J.E."/>
            <person name="Goswami T."/>
            <person name="Rad R."/>
            <person name="Beausoleil S.A."/>
            <person name="Villen J."/>
            <person name="Haas W."/>
            <person name="Sowa M.E."/>
            <person name="Gygi S.P."/>
        </authorList>
    </citation>
    <scope>IDENTIFICATION BY MASS SPECTROMETRY [LARGE SCALE ANALYSIS]</scope>
    <source>
        <tissue>Spleen</tissue>
        <tissue>Testis</tissue>
    </source>
</reference>
<gene>
    <name type="primary">Med8</name>
    <name type="ORF">MNCb-2386</name>
</gene>
<organism>
    <name type="scientific">Mus musculus</name>
    <name type="common">Mouse</name>
    <dbReference type="NCBI Taxonomy" id="10090"/>
    <lineage>
        <taxon>Eukaryota</taxon>
        <taxon>Metazoa</taxon>
        <taxon>Chordata</taxon>
        <taxon>Craniata</taxon>
        <taxon>Vertebrata</taxon>
        <taxon>Euteleostomi</taxon>
        <taxon>Mammalia</taxon>
        <taxon>Eutheria</taxon>
        <taxon>Euarchontoglires</taxon>
        <taxon>Glires</taxon>
        <taxon>Rodentia</taxon>
        <taxon>Myomorpha</taxon>
        <taxon>Muroidea</taxon>
        <taxon>Muridae</taxon>
        <taxon>Murinae</taxon>
        <taxon>Mus</taxon>
        <taxon>Mus</taxon>
    </lineage>
</organism>
<sequence length="268" mass="29199">MQREEKQLEASLDALLNQVADLKNSLGSFIYKLENEYDRLTWPSVLDSFALLSGQLNTLNKVLKHEKTPLFRNQVIIPLVLSPDRDEDLMRQTEGRVPVFSHEVVPDHLRTKPDPEVEEQEKQLTTDAARIGADAAQKQIQSLNKMCSNLLEKISKEERESESGGLRPNKQTFNPGDTNALVAAVAFGKGLSNWRPSGSSGPGQPGQPGAGTILAGASGLPQVQMPGAPNQQQPMLSGVQMAQAGQPGKMPSGIKTNIKSASMHPYQR</sequence>
<keyword id="KW-0002">3D-structure</keyword>
<keyword id="KW-0010">Activator</keyword>
<keyword id="KW-0175">Coiled coil</keyword>
<keyword id="KW-0539">Nucleus</keyword>
<keyword id="KW-0597">Phosphoprotein</keyword>
<keyword id="KW-1185">Reference proteome</keyword>
<keyword id="KW-0804">Transcription</keyword>
<keyword id="KW-0805">Transcription regulation</keyword>
<keyword id="KW-0833">Ubl conjugation pathway</keyword>
<dbReference type="EMBL" id="AB041805">
    <property type="protein sequence ID" value="BAA95113.1"/>
    <property type="molecule type" value="mRNA"/>
</dbReference>
<dbReference type="EMBL" id="AK008759">
    <property type="protein sequence ID" value="BAB25879.1"/>
    <property type="molecule type" value="mRNA"/>
</dbReference>
<dbReference type="EMBL" id="AK147032">
    <property type="protein sequence ID" value="BAE27624.1"/>
    <property type="molecule type" value="mRNA"/>
</dbReference>
<dbReference type="EMBL" id="AK148025">
    <property type="protein sequence ID" value="BAE28295.1"/>
    <property type="molecule type" value="mRNA"/>
</dbReference>
<dbReference type="EMBL" id="BC002315">
    <property type="protein sequence ID" value="AAH02315.1"/>
    <property type="molecule type" value="mRNA"/>
</dbReference>
<dbReference type="EMBL" id="BC021870">
    <property type="protein sequence ID" value="AAH21870.1"/>
    <property type="molecule type" value="mRNA"/>
</dbReference>
<dbReference type="CCDS" id="CCDS38854.1"/>
<dbReference type="RefSeq" id="NP_001277617.1">
    <property type="nucleotide sequence ID" value="NM_001290688.1"/>
</dbReference>
<dbReference type="RefSeq" id="NP_064384.2">
    <property type="nucleotide sequence ID" value="NM_020000.3"/>
</dbReference>
<dbReference type="RefSeq" id="NP_776067.1">
    <property type="nucleotide sequence ID" value="NM_173719.3"/>
</dbReference>
<dbReference type="PDB" id="6W1S">
    <property type="method" value="EM"/>
    <property type="resolution" value="4.02 A"/>
    <property type="chains" value="E=7-186"/>
</dbReference>
<dbReference type="PDB" id="8T1I">
    <property type="method" value="EM"/>
    <property type="resolution" value="4.68 A"/>
    <property type="chains" value="E=1-268"/>
</dbReference>
<dbReference type="PDB" id="8T1L">
    <property type="method" value="EM"/>
    <property type="resolution" value="4.83 A"/>
    <property type="chains" value="E=1-268"/>
</dbReference>
<dbReference type="PDBsum" id="6W1S"/>
<dbReference type="PDBsum" id="8T1I"/>
<dbReference type="PDBsum" id="8T1L"/>
<dbReference type="EMDB" id="EMD-21514"/>
<dbReference type="EMDB" id="EMD-40968"/>
<dbReference type="EMDB" id="EMD-40971"/>
<dbReference type="SMR" id="Q9D7W5"/>
<dbReference type="BioGRID" id="219788">
    <property type="interactions" value="3"/>
</dbReference>
<dbReference type="ComplexPortal" id="CPX-3264">
    <property type="entry name" value="Core mediator complex"/>
</dbReference>
<dbReference type="FunCoup" id="Q9D7W5">
    <property type="interactions" value="4504"/>
</dbReference>
<dbReference type="IntAct" id="Q9D7W5">
    <property type="interactions" value="12"/>
</dbReference>
<dbReference type="MINT" id="Q9D7W5"/>
<dbReference type="STRING" id="10090.ENSMUSP00000019229"/>
<dbReference type="iPTMnet" id="Q9D7W5"/>
<dbReference type="PhosphoSitePlus" id="Q9D7W5"/>
<dbReference type="jPOST" id="Q9D7W5"/>
<dbReference type="PaxDb" id="10090-ENSMUSP00000019229"/>
<dbReference type="PeptideAtlas" id="Q9D7W5"/>
<dbReference type="ProteomicsDB" id="292289"/>
<dbReference type="Pumba" id="Q9D7W5"/>
<dbReference type="Antibodypedia" id="32328">
    <property type="antibodies" value="173 antibodies from 28 providers"/>
</dbReference>
<dbReference type="DNASU" id="80509"/>
<dbReference type="Ensembl" id="ENSMUST00000019229.15">
    <property type="protein sequence ID" value="ENSMUSP00000019229.9"/>
    <property type="gene ID" value="ENSMUSG00000006392.17"/>
</dbReference>
<dbReference type="GeneID" id="80509"/>
<dbReference type="KEGG" id="mmu:80509"/>
<dbReference type="UCSC" id="uc008ujw.2">
    <property type="organism name" value="mouse"/>
</dbReference>
<dbReference type="AGR" id="MGI:1915269"/>
<dbReference type="CTD" id="112950"/>
<dbReference type="MGI" id="MGI:1915269">
    <property type="gene designation" value="Med8"/>
</dbReference>
<dbReference type="VEuPathDB" id="HostDB:ENSMUSG00000006392"/>
<dbReference type="eggNOG" id="KOG3583">
    <property type="taxonomic scope" value="Eukaryota"/>
</dbReference>
<dbReference type="GeneTree" id="ENSGT00390000011838"/>
<dbReference type="InParanoid" id="Q9D7W5"/>
<dbReference type="OMA" id="FKLEHEY"/>
<dbReference type="OrthoDB" id="150687at2759"/>
<dbReference type="PhylomeDB" id="Q9D7W5"/>
<dbReference type="TreeFam" id="TF316778"/>
<dbReference type="UniPathway" id="UPA00143"/>
<dbReference type="BioGRID-ORCS" id="80509">
    <property type="hits" value="31 hits in 82 CRISPR screens"/>
</dbReference>
<dbReference type="PRO" id="PR:Q9D7W5"/>
<dbReference type="Proteomes" id="UP000000589">
    <property type="component" value="Chromosome 4"/>
</dbReference>
<dbReference type="RNAct" id="Q9D7W5">
    <property type="molecule type" value="protein"/>
</dbReference>
<dbReference type="Bgee" id="ENSMUSG00000006392">
    <property type="expression patterns" value="Expressed in ectoderm and 261 other cell types or tissues"/>
</dbReference>
<dbReference type="ExpressionAtlas" id="Q9D7W5">
    <property type="expression patterns" value="baseline and differential"/>
</dbReference>
<dbReference type="GO" id="GO:0070847">
    <property type="term" value="C:core mediator complex"/>
    <property type="evidence" value="ECO:0000266"/>
    <property type="project" value="ComplexPortal"/>
</dbReference>
<dbReference type="GO" id="GO:0016592">
    <property type="term" value="C:mediator complex"/>
    <property type="evidence" value="ECO:0000314"/>
    <property type="project" value="MGI"/>
</dbReference>
<dbReference type="GO" id="GO:0005654">
    <property type="term" value="C:nucleoplasm"/>
    <property type="evidence" value="ECO:0000304"/>
    <property type="project" value="Reactome"/>
</dbReference>
<dbReference type="GO" id="GO:0005634">
    <property type="term" value="C:nucleus"/>
    <property type="evidence" value="ECO:0000266"/>
    <property type="project" value="ComplexPortal"/>
</dbReference>
<dbReference type="GO" id="GO:0003712">
    <property type="term" value="F:transcription coregulator activity"/>
    <property type="evidence" value="ECO:0007669"/>
    <property type="project" value="InterPro"/>
</dbReference>
<dbReference type="GO" id="GO:0032968">
    <property type="term" value="P:positive regulation of transcription elongation by RNA polymerase II"/>
    <property type="evidence" value="ECO:0000303"/>
    <property type="project" value="ComplexPortal"/>
</dbReference>
<dbReference type="GO" id="GO:0060261">
    <property type="term" value="P:positive regulation of transcription initiation by RNA polymerase II"/>
    <property type="evidence" value="ECO:0000303"/>
    <property type="project" value="ComplexPortal"/>
</dbReference>
<dbReference type="GO" id="GO:0016567">
    <property type="term" value="P:protein ubiquitination"/>
    <property type="evidence" value="ECO:0007669"/>
    <property type="project" value="UniProtKB-UniPathway"/>
</dbReference>
<dbReference type="GO" id="GO:0051123">
    <property type="term" value="P:RNA polymerase II preinitiation complex assembly"/>
    <property type="evidence" value="ECO:0000303"/>
    <property type="project" value="ComplexPortal"/>
</dbReference>
<dbReference type="FunFam" id="1.20.58.1710:FF:000001">
    <property type="entry name" value="Mediator of RNA polymerase II transcription subunit 8"/>
    <property type="match status" value="1"/>
</dbReference>
<dbReference type="Gene3D" id="1.20.58.1710">
    <property type="match status" value="1"/>
</dbReference>
<dbReference type="InterPro" id="IPR019364">
    <property type="entry name" value="Mediatior_Med8_fun/met"/>
</dbReference>
<dbReference type="PANTHER" id="PTHR13074">
    <property type="entry name" value="MEDIATOR OF RNA POLYMERASE II TRANSCRIPTION SUBUNIT 8"/>
    <property type="match status" value="1"/>
</dbReference>
<dbReference type="PANTHER" id="PTHR13074:SF9">
    <property type="entry name" value="MEDIATOR OF RNA POLYMERASE II TRANSCRIPTION SUBUNIT 8"/>
    <property type="match status" value="1"/>
</dbReference>
<dbReference type="Pfam" id="PF10232">
    <property type="entry name" value="Med8"/>
    <property type="match status" value="1"/>
</dbReference>
<proteinExistence type="evidence at protein level"/>
<comment type="function">
    <text evidence="1">Component of the Mediator complex, a coactivator involved in the regulated transcription of nearly all RNA polymerase II-dependent genes. Mediator functions as a bridge to convey information from gene-specific regulatory proteins to the basal RNA polymerase II transcription machinery. Mediator is recruited to promoters by direct interactions with regulatory proteins and serves as a scaffold for the assembly of a functional preinitiation complex with RNA polymerase II and the general transcription factors. May play a role as a target recruitment subunit in E3 ubiquitin-protein ligase complexes and thus in ubiquitination and subsequent proteasomal degradation of target proteins (By similarity).</text>
</comment>
<comment type="pathway">
    <text>Protein modification; protein ubiquitination.</text>
</comment>
<comment type="subunit">
    <text evidence="1">Component of the Mediator complex, which is composed of MED1, MED4, MED6, MED7, MED8, MED9, MED10, MED11, MED12, MED13, MED13L, MED14, MED15, MED16, MED17, MED18, MED19, MED20, MED21, MED22, MED23, MED24, MED25, MED26, MED27, MED29, MED30, MED31, CCNC, CDK8 and CDC2L6/CDK11. The MED12, MED13, CCNC and CDK8 subunits form a distinct module termed the CDK8 module. Mediator containing the CDK8 module is less active than Mediator lacking this module in supporting transcriptional activation. Individual preparations of the Mediator complex lacking one or more distinct subunits have been variously termed ARC, CRSP, DRIP, PC2, SMCC and TRAP. May be part of a multisubunit E3 ubiquitin-protein ligase complex with the Elongin BC complex (ELOB and ELOC), CUL2 and RBX1 (By similarity).</text>
</comment>
<comment type="interaction">
    <interactant intactId="EBI-7990252">
        <id>Q9D7W5</id>
    </interactant>
    <interactant intactId="EBI-398698">
        <id>Q9R0X0</id>
        <label>Med20</label>
    </interactant>
    <organismsDiffer>false</organismsDiffer>
    <experiments>2</experiments>
</comment>
<comment type="interaction">
    <interactant intactId="EBI-7990252">
        <id>Q9D7W5</id>
    </interactant>
    <interactant intactId="EBI-309220">
        <id>Q9CQI9</id>
        <label>Med30</label>
    </interactant>
    <organismsDiffer>false</organismsDiffer>
    <experiments>2</experiments>
</comment>
<comment type="interaction">
    <interactant intactId="EBI-7990252">
        <id>Q9D7W5</id>
    </interactant>
    <interactant intactId="EBI-394562">
        <id>Q9NVC6</id>
        <label>MED17</label>
    </interactant>
    <organismsDiffer>true</organismsDiffer>
    <experiments>2</experiments>
</comment>
<comment type="interaction">
    <interactant intactId="EBI-7990252">
        <id>Q9D7W5</id>
    </interactant>
    <interactant intactId="EBI-394687">
        <id>Q15528</id>
        <label>MED22</label>
    </interactant>
    <organismsDiffer>true</organismsDiffer>
    <experiments>2</experiments>
</comment>
<comment type="interaction">
    <interactant intactId="EBI-7990252">
        <id>Q9D7W5</id>
    </interactant>
    <interactant intactId="EBI-394603">
        <id>Q6P2C8</id>
        <label>MED27</label>
    </interactant>
    <organismsDiffer>true</organismsDiffer>
    <experiments>2</experiments>
</comment>
<comment type="interaction">
    <interactant intactId="EBI-7990252">
        <id>Q9D7W5</id>
    </interactant>
    <interactant intactId="EBI-514199">
        <id>Q9H204</id>
        <label>MED28</label>
    </interactant>
    <organismsDiffer>true</organismsDiffer>
    <experiments>2</experiments>
</comment>
<comment type="interaction">
    <interactant intactId="EBI-7990252">
        <id>Q9D7W5</id>
    </interactant>
    <interactant intactId="EBI-394656">
        <id>Q9NX70</id>
        <label>MED29</label>
    </interactant>
    <organismsDiffer>true</organismsDiffer>
    <experiments>2</experiments>
</comment>
<comment type="interaction">
    <interactant intactId="EBI-7990252">
        <id>Q9D7W5</id>
    </interactant>
    <interactant intactId="EBI-394624">
        <id>O75586</id>
        <label>MED6</label>
    </interactant>
    <organismsDiffer>true</organismsDiffer>
    <experiments>2</experiments>
</comment>
<comment type="subcellular location">
    <subcellularLocation>
        <location evidence="5">Nucleus</location>
    </subcellularLocation>
</comment>
<comment type="similarity">
    <text evidence="5">Belongs to the Mediator complex subunit 8 family.</text>
</comment>
<evidence type="ECO:0000250" key="1"/>
<evidence type="ECO:0000250" key="2">
    <source>
        <dbReference type="UniProtKB" id="Q96G25"/>
    </source>
</evidence>
<evidence type="ECO:0000255" key="3"/>
<evidence type="ECO:0000256" key="4">
    <source>
        <dbReference type="SAM" id="MobiDB-lite"/>
    </source>
</evidence>
<evidence type="ECO:0000305" key="5"/>
<name>MED8_MOUSE</name>
<feature type="chain" id="PRO_0000096395" description="Mediator of RNA polymerase II transcription subunit 8">
    <location>
        <begin position="1"/>
        <end position="268"/>
    </location>
</feature>
<feature type="region of interest" description="Interaction with the Elongin BC complex" evidence="1">
    <location>
        <begin position="142"/>
        <end position="151"/>
    </location>
</feature>
<feature type="region of interest" description="Disordered" evidence="4">
    <location>
        <begin position="156"/>
        <end position="176"/>
    </location>
</feature>
<feature type="region of interest" description="Disordered" evidence="4">
    <location>
        <begin position="193"/>
        <end position="268"/>
    </location>
</feature>
<feature type="coiled-coil region" evidence="3">
    <location>
        <begin position="1"/>
        <end position="29"/>
    </location>
</feature>
<feature type="coiled-coil region" evidence="3">
    <location>
        <begin position="133"/>
        <end position="163"/>
    </location>
</feature>
<feature type="compositionally biased region" description="Gly residues" evidence="4">
    <location>
        <begin position="200"/>
        <end position="209"/>
    </location>
</feature>
<feature type="modified residue" description="Phosphoserine" evidence="2">
    <location>
        <position position="82"/>
    </location>
</feature>
<feature type="sequence conflict" description="In Ref. 1; BAA95113." evidence="5" ref="1">
    <original>N</original>
    <variation>NSFALLSGQLN</variation>
    <location>
        <position position="57"/>
    </location>
</feature>
<protein>
    <recommendedName>
        <fullName>Mediator of RNA polymerase II transcription subunit 8</fullName>
    </recommendedName>
    <alternativeName>
        <fullName>Activator-recruited cofactor 32 kDa component</fullName>
        <shortName>ARC32</shortName>
    </alternativeName>
    <alternativeName>
        <fullName>Mediator complex subunit 8</fullName>
    </alternativeName>
</protein>